<dbReference type="EMBL" id="S78295">
    <property type="protein sequence ID" value="AAB34481.1"/>
    <property type="molecule type" value="mRNA"/>
</dbReference>
<dbReference type="PIR" id="I47043">
    <property type="entry name" value="I47043"/>
</dbReference>
<dbReference type="BMRB" id="P54877"/>
<dbReference type="SMR" id="P54877"/>
<dbReference type="STRING" id="9925.ENSCHIP00000027053"/>
<dbReference type="Ensembl" id="ENSCHIT00010026624.1">
    <property type="protein sequence ID" value="ENSCHIP00010018980.1"/>
    <property type="gene ID" value="ENSCHIG00010013897.1"/>
</dbReference>
<dbReference type="Ensembl" id="ENSCHIT00020025897">
    <property type="protein sequence ID" value="ENSCHIP00020019106"/>
    <property type="gene ID" value="ENSCHIG00020012515"/>
</dbReference>
<dbReference type="Ensembl" id="ENSCHIT00040026188">
    <property type="protein sequence ID" value="ENSCHIP00040020527"/>
    <property type="gene ID" value="ENSCHIG00040011982"/>
</dbReference>
<dbReference type="Proteomes" id="UP000291000">
    <property type="component" value="Unplaced"/>
</dbReference>
<dbReference type="Proteomes" id="UP000694566">
    <property type="component" value="Chromosome 29"/>
</dbReference>
<dbReference type="GO" id="GO:0005516">
    <property type="term" value="F:calmodulin binding"/>
    <property type="evidence" value="ECO:0007669"/>
    <property type="project" value="UniProtKB-KW"/>
</dbReference>
<dbReference type="Gene3D" id="1.20.5.190">
    <property type="match status" value="1"/>
</dbReference>
<dbReference type="InterPro" id="IPR000048">
    <property type="entry name" value="IQ_motif_EF-hand-BS"/>
</dbReference>
<dbReference type="PANTHER" id="PTHR10699">
    <property type="entry name" value="NEUROMODULIN"/>
    <property type="match status" value="1"/>
</dbReference>
<dbReference type="PANTHER" id="PTHR10699:SF16">
    <property type="entry name" value="SPERM SURFACE PROTEIN SP17"/>
    <property type="match status" value="1"/>
</dbReference>
<dbReference type="Pfam" id="PF00612">
    <property type="entry name" value="IQ"/>
    <property type="match status" value="1"/>
</dbReference>
<dbReference type="SMART" id="SM00015">
    <property type="entry name" value="IQ"/>
    <property type="match status" value="1"/>
</dbReference>
<dbReference type="PROSITE" id="PS50096">
    <property type="entry name" value="IQ"/>
    <property type="match status" value="1"/>
</dbReference>
<evidence type="ECO:0000250" key="1"/>
<evidence type="ECO:0000250" key="2">
    <source>
        <dbReference type="UniProtKB" id="P35722"/>
    </source>
</evidence>
<evidence type="ECO:0000250" key="3">
    <source>
        <dbReference type="UniProtKB" id="Q92686"/>
    </source>
</evidence>
<evidence type="ECO:0000255" key="4">
    <source>
        <dbReference type="PROSITE-ProRule" id="PRU00116"/>
    </source>
</evidence>
<evidence type="ECO:0000256" key="5">
    <source>
        <dbReference type="SAM" id="MobiDB-lite"/>
    </source>
</evidence>
<evidence type="ECO:0000305" key="6"/>
<protein>
    <recommendedName>
        <fullName>Neurogranin</fullName>
        <shortName>NG</shortName>
    </recommendedName>
    <alternativeName>
        <fullName>Protein kinase C substrate 7.5 kDa protein</fullName>
    </alternativeName>
    <alternativeName>
        <fullName>RC3</fullName>
    </alternativeName>
    <component>
        <recommendedName>
            <fullName>NEUG(55-78)</fullName>
        </recommendedName>
    </component>
</protein>
<keyword id="KW-0007">Acetylation</keyword>
<keyword id="KW-0112">Calmodulin-binding</keyword>
<keyword id="KW-0164">Citrullination</keyword>
<keyword id="KW-0488">Methylation</keyword>
<keyword id="KW-0597">Phosphoprotein</keyword>
<keyword id="KW-1185">Reference proteome</keyword>
<feature type="chain" id="PRO_0000159590" description="Neurogranin">
    <location>
        <begin position="1"/>
        <end position="78"/>
    </location>
</feature>
<feature type="peptide" id="PRO_0000377701" description="NEUG(55-78)" evidence="1">
    <location>
        <begin position="55"/>
        <end position="78"/>
    </location>
</feature>
<feature type="domain" description="IQ" evidence="4">
    <location>
        <begin position="26"/>
        <end position="47"/>
    </location>
</feature>
<feature type="domain" description="Collagen-like">
    <location>
        <begin position="48"/>
        <end position="78"/>
    </location>
</feature>
<feature type="region of interest" description="Disordered" evidence="5">
    <location>
        <begin position="38"/>
        <end position="78"/>
    </location>
</feature>
<feature type="compositionally biased region" description="Gly residues" evidence="5">
    <location>
        <begin position="55"/>
        <end position="78"/>
    </location>
</feature>
<feature type="site" description="Crucial for interaction with calmodulin" evidence="1">
    <location>
        <position position="38"/>
    </location>
</feature>
<feature type="modified residue" description="N-acetylmethionine" evidence="2">
    <location>
        <position position="1"/>
    </location>
</feature>
<feature type="modified residue" description="Phosphoserine; by PHK and PKC" evidence="2">
    <location>
        <position position="36"/>
    </location>
</feature>
<feature type="modified residue" description="Citrulline; partial" evidence="1">
    <location>
        <position position="68"/>
    </location>
</feature>
<feature type="modified residue" description="Omega-N-methylarginine" evidence="3">
    <location>
        <position position="68"/>
    </location>
</feature>
<sequence>MDCCTESACSKPDDDILDIPLDDPGANAAAAKIQASFRGHMARKKIKSGERGRKGPGPGGPGGAGGARGGAGGGPSGD</sequence>
<organism>
    <name type="scientific">Capra hircus</name>
    <name type="common">Goat</name>
    <dbReference type="NCBI Taxonomy" id="9925"/>
    <lineage>
        <taxon>Eukaryota</taxon>
        <taxon>Metazoa</taxon>
        <taxon>Chordata</taxon>
        <taxon>Craniata</taxon>
        <taxon>Vertebrata</taxon>
        <taxon>Euteleostomi</taxon>
        <taxon>Mammalia</taxon>
        <taxon>Eutheria</taxon>
        <taxon>Laurasiatheria</taxon>
        <taxon>Artiodactyla</taxon>
        <taxon>Ruminantia</taxon>
        <taxon>Pecora</taxon>
        <taxon>Bovidae</taxon>
        <taxon>Caprinae</taxon>
        <taxon>Capra</taxon>
    </lineage>
</organism>
<reference key="1">
    <citation type="journal article" date="1995" name="Brain Res. Mol. Brain Res.">
        <title>RC3/neurogranin structure and expression in the caprine brain in relation to congenital hypothyroidism.</title>
        <authorList>
            <person name="Piosik P.A."/>
            <person name="van Groenigen M."/>
            <person name="Ponne N.J."/>
            <person name="Bolhuis P.A."/>
            <person name="Baas F."/>
        </authorList>
    </citation>
    <scope>NUCLEOTIDE SEQUENCE [MRNA]</scope>
    <source>
        <tissue>Brain</tissue>
    </source>
</reference>
<accession>P54877</accession>
<name>NEUG_CAPHI</name>
<comment type="function">
    <text evidence="1">Acts as a 'third messenger' substrate of protein kinase C-mediated molecular cascades during synaptic development and remodeling. Binds to calmodulin in the absence of calcium (By similarity).</text>
</comment>
<comment type="domain">
    <text evidence="1">Neurogranin is intrinsically unstructured; however, upon binding with CaM, The IQ domain adopts a helical conformation.</text>
</comment>
<comment type="PTM">
    <text evidence="1">Phosphorylated at Ser-36 by PHK and PKC, phosphorylation prevents interaction with Calmodulin and interrupts several learning- and memory-associated functions.</text>
</comment>
<comment type="similarity">
    <text evidence="6">Belongs to the neurogranin family.</text>
</comment>
<proteinExistence type="inferred from homology"/>
<gene>
    <name type="primary">NRGN</name>
</gene>